<name>FBSB_SYNSC</name>
<sequence>MDQTLIQEILEIVEQAAIASASLSGKGLKDEADALAVDAMRKRMNQIQMQGRIVIGEGERDEAPMLYIGEEVGTGTGPGVDFAVDPCEGTNLCAFNQRGSMAVLAASDRGGLFNAPDFYMKKLAAPPAAKGKVDIRKSATENIKILSECLGLPVDELNIVVMDRARHKDLIAEIRGTGARIQPISDGDVQAAIACGFAGTGTHCLMGIGAAPEGVISAAAMRALGGHFQGQLVYDPAIAQTSEWADMTKEGNLARLAEMGIADPDKVYEAEELACGEHVCFAGSGITDGLLFNGVKFEKDCTRTSSLVISNLDNTCRFTNTVHIKEDAQSIALS</sequence>
<accession>Q3AK74</accession>
<keyword id="KW-0113">Calvin cycle</keyword>
<keyword id="KW-0119">Carbohydrate metabolism</keyword>
<keyword id="KW-0378">Hydrolase</keyword>
<keyword id="KW-0464">Manganese</keyword>
<keyword id="KW-0479">Metal-binding</keyword>
<gene>
    <name type="ordered locus">Syncc9605_1253</name>
</gene>
<protein>
    <recommendedName>
        <fullName>D-fructose 1,6-bisphosphatase class 2/sedoheptulose 1,7-bisphosphatase</fullName>
        <shortName>FBPase class 2/SBPase</shortName>
        <ecNumber>3.1.3.11</ecNumber>
        <ecNumber>3.1.3.37</ecNumber>
    </recommendedName>
</protein>
<dbReference type="EC" id="3.1.3.11"/>
<dbReference type="EC" id="3.1.3.37"/>
<dbReference type="EMBL" id="CP000110">
    <property type="protein sequence ID" value="ABB35008.1"/>
    <property type="molecule type" value="Genomic_DNA"/>
</dbReference>
<dbReference type="RefSeq" id="WP_011364227.1">
    <property type="nucleotide sequence ID" value="NC_007516.1"/>
</dbReference>
<dbReference type="SMR" id="Q3AK74"/>
<dbReference type="STRING" id="110662.Syncc9605_1253"/>
<dbReference type="KEGG" id="syd:Syncc9605_1253"/>
<dbReference type="eggNOG" id="COG1494">
    <property type="taxonomic scope" value="Bacteria"/>
</dbReference>
<dbReference type="HOGENOM" id="CLU_054938_0_0_3"/>
<dbReference type="OrthoDB" id="9779353at2"/>
<dbReference type="UniPathway" id="UPA00116"/>
<dbReference type="GO" id="GO:0005829">
    <property type="term" value="C:cytosol"/>
    <property type="evidence" value="ECO:0007669"/>
    <property type="project" value="TreeGrafter"/>
</dbReference>
<dbReference type="GO" id="GO:0042132">
    <property type="term" value="F:fructose 1,6-bisphosphate 1-phosphatase activity"/>
    <property type="evidence" value="ECO:0007669"/>
    <property type="project" value="UniProtKB-EC"/>
</dbReference>
<dbReference type="GO" id="GO:0046872">
    <property type="term" value="F:metal ion binding"/>
    <property type="evidence" value="ECO:0007669"/>
    <property type="project" value="UniProtKB-KW"/>
</dbReference>
<dbReference type="GO" id="GO:0050278">
    <property type="term" value="F:sedoheptulose-bisphosphatase activity"/>
    <property type="evidence" value="ECO:0007669"/>
    <property type="project" value="UniProtKB-EC"/>
</dbReference>
<dbReference type="GO" id="GO:0030388">
    <property type="term" value="P:fructose 1,6-bisphosphate metabolic process"/>
    <property type="evidence" value="ECO:0007669"/>
    <property type="project" value="TreeGrafter"/>
</dbReference>
<dbReference type="GO" id="GO:0006094">
    <property type="term" value="P:gluconeogenesis"/>
    <property type="evidence" value="ECO:0007669"/>
    <property type="project" value="InterPro"/>
</dbReference>
<dbReference type="GO" id="GO:0006071">
    <property type="term" value="P:glycerol metabolic process"/>
    <property type="evidence" value="ECO:0007669"/>
    <property type="project" value="InterPro"/>
</dbReference>
<dbReference type="GO" id="GO:0019253">
    <property type="term" value="P:reductive pentose-phosphate cycle"/>
    <property type="evidence" value="ECO:0007669"/>
    <property type="project" value="UniProtKB-UniPathway"/>
</dbReference>
<dbReference type="CDD" id="cd01516">
    <property type="entry name" value="FBPase_glpX"/>
    <property type="match status" value="1"/>
</dbReference>
<dbReference type="FunFam" id="3.40.190.90:FF:000001">
    <property type="entry name" value="Fructose-1,6-bisphosphatase"/>
    <property type="match status" value="1"/>
</dbReference>
<dbReference type="Gene3D" id="3.40.190.90">
    <property type="match status" value="1"/>
</dbReference>
<dbReference type="Gene3D" id="3.30.540.10">
    <property type="entry name" value="Fructose-1,6-Bisphosphatase, subunit A, domain 1"/>
    <property type="match status" value="1"/>
</dbReference>
<dbReference type="InterPro" id="IPR004464">
    <property type="entry name" value="FBPase_class-2/SBPase"/>
</dbReference>
<dbReference type="NCBIfam" id="TIGR00330">
    <property type="entry name" value="glpX"/>
    <property type="match status" value="1"/>
</dbReference>
<dbReference type="PANTHER" id="PTHR30447:SF0">
    <property type="entry name" value="FRUCTOSE-1,6-BISPHOSPHATASE 1 CLASS 2-RELATED"/>
    <property type="match status" value="1"/>
</dbReference>
<dbReference type="PANTHER" id="PTHR30447">
    <property type="entry name" value="FRUCTOSE-1,6-BISPHOSPHATASE CLASS 2"/>
    <property type="match status" value="1"/>
</dbReference>
<dbReference type="Pfam" id="PF03320">
    <property type="entry name" value="FBPase_glpX"/>
    <property type="match status" value="1"/>
</dbReference>
<dbReference type="PIRSF" id="PIRSF004532">
    <property type="entry name" value="GlpX"/>
    <property type="match status" value="1"/>
</dbReference>
<dbReference type="SUPFAM" id="SSF56655">
    <property type="entry name" value="Carbohydrate phosphatase"/>
    <property type="match status" value="1"/>
</dbReference>
<evidence type="ECO:0000250" key="1"/>
<evidence type="ECO:0000305" key="2"/>
<organism>
    <name type="scientific">Synechococcus sp. (strain CC9605)</name>
    <dbReference type="NCBI Taxonomy" id="110662"/>
    <lineage>
        <taxon>Bacteria</taxon>
        <taxon>Bacillati</taxon>
        <taxon>Cyanobacteriota</taxon>
        <taxon>Cyanophyceae</taxon>
        <taxon>Synechococcales</taxon>
        <taxon>Synechococcaceae</taxon>
        <taxon>Synechococcus</taxon>
    </lineage>
</organism>
<proteinExistence type="inferred from homology"/>
<reference key="1">
    <citation type="submission" date="2005-07" db="EMBL/GenBank/DDBJ databases">
        <title>Complete sequence of Synechococcus sp. CC9605.</title>
        <authorList>
            <consortium name="US DOE Joint Genome Institute"/>
            <person name="Copeland A."/>
            <person name="Lucas S."/>
            <person name="Lapidus A."/>
            <person name="Barry K."/>
            <person name="Detter J.C."/>
            <person name="Glavina T."/>
            <person name="Hammon N."/>
            <person name="Israni S."/>
            <person name="Pitluck S."/>
            <person name="Schmutz J."/>
            <person name="Martinez M."/>
            <person name="Larimer F."/>
            <person name="Land M."/>
            <person name="Kyrpides N."/>
            <person name="Ivanova N."/>
            <person name="Richardson P."/>
        </authorList>
    </citation>
    <scope>NUCLEOTIDE SEQUENCE [LARGE SCALE GENOMIC DNA]</scope>
    <source>
        <strain>CC9605</strain>
    </source>
</reference>
<comment type="function">
    <text evidence="1">Catalyzes the hydrolysis of fructose 1,6-bisphosphate (Fru 1,6-P2) and sedoheptulose 1,7-bisphosphate (Sed 1,7-P2) to fructose 6-phosphate and sedoheptulose 7-phosphate, respectively.</text>
</comment>
<comment type="catalytic activity">
    <reaction>
        <text>beta-D-fructose 1,6-bisphosphate + H2O = beta-D-fructose 6-phosphate + phosphate</text>
        <dbReference type="Rhea" id="RHEA:11064"/>
        <dbReference type="ChEBI" id="CHEBI:15377"/>
        <dbReference type="ChEBI" id="CHEBI:32966"/>
        <dbReference type="ChEBI" id="CHEBI:43474"/>
        <dbReference type="ChEBI" id="CHEBI:57634"/>
        <dbReference type="EC" id="3.1.3.11"/>
    </reaction>
</comment>
<comment type="catalytic activity">
    <reaction>
        <text>D-sedoheptulose 1,7-bisphosphate + H2O = D-sedoheptulose 7-phosphate + phosphate</text>
        <dbReference type="Rhea" id="RHEA:17461"/>
        <dbReference type="ChEBI" id="CHEBI:15377"/>
        <dbReference type="ChEBI" id="CHEBI:43474"/>
        <dbReference type="ChEBI" id="CHEBI:57483"/>
        <dbReference type="ChEBI" id="CHEBI:58335"/>
        <dbReference type="EC" id="3.1.3.37"/>
    </reaction>
</comment>
<comment type="cofactor">
    <cofactor evidence="1">
        <name>Mn(2+)</name>
        <dbReference type="ChEBI" id="CHEBI:29035"/>
    </cofactor>
</comment>
<comment type="pathway">
    <text>Carbohydrate biosynthesis; Calvin cycle.</text>
</comment>
<comment type="subunit">
    <text evidence="1">Homotetramer.</text>
</comment>
<comment type="similarity">
    <text evidence="2">Belongs to the FBPase class 2 family.</text>
</comment>
<feature type="chain" id="PRO_0000342728" description="D-fructose 1,6-bisphosphatase class 2/sedoheptulose 1,7-bisphosphatase">
    <location>
        <begin position="1"/>
        <end position="334"/>
    </location>
</feature>
<feature type="binding site" evidence="1">
    <location>
        <position position="33"/>
    </location>
    <ligand>
        <name>Mn(2+)</name>
        <dbReference type="ChEBI" id="CHEBI:29035"/>
        <label>1</label>
    </ligand>
</feature>
<feature type="binding site" evidence="1">
    <location>
        <position position="57"/>
    </location>
    <ligand>
        <name>Mn(2+)</name>
        <dbReference type="ChEBI" id="CHEBI:29035"/>
        <label>1</label>
    </ligand>
</feature>
<feature type="binding site" evidence="1">
    <location>
        <position position="85"/>
    </location>
    <ligand>
        <name>Mn(2+)</name>
        <dbReference type="ChEBI" id="CHEBI:29035"/>
        <label>2</label>
    </ligand>
</feature>
<feature type="binding site" evidence="1">
    <location>
        <begin position="88"/>
        <end position="90"/>
    </location>
    <ligand>
        <name>substrate</name>
    </ligand>
</feature>
<feature type="binding site" evidence="1">
    <location>
        <position position="88"/>
    </location>
    <ligand>
        <name>Mn(2+)</name>
        <dbReference type="ChEBI" id="CHEBI:29035"/>
        <label>2</label>
    </ligand>
</feature>
<feature type="binding site" evidence="1">
    <location>
        <position position="119"/>
    </location>
    <ligand>
        <name>substrate</name>
    </ligand>
</feature>
<feature type="binding site" evidence="1">
    <location>
        <begin position="164"/>
        <end position="166"/>
    </location>
    <ligand>
        <name>substrate</name>
    </ligand>
</feature>
<feature type="binding site" evidence="1">
    <location>
        <begin position="186"/>
        <end position="188"/>
    </location>
    <ligand>
        <name>substrate</name>
    </ligand>
</feature>
<feature type="binding site" evidence="1">
    <location>
        <position position="213"/>
    </location>
    <ligand>
        <name>Mn(2+)</name>
        <dbReference type="ChEBI" id="CHEBI:29035"/>
        <label>2</label>
    </ligand>
</feature>